<dbReference type="EMBL" id="CP000820">
    <property type="protein sequence ID" value="ABW16207.1"/>
    <property type="molecule type" value="Genomic_DNA"/>
</dbReference>
<dbReference type="RefSeq" id="WP_020464274.1">
    <property type="nucleotide sequence ID" value="NC_009921.1"/>
</dbReference>
<dbReference type="SMR" id="A8L2B6"/>
<dbReference type="STRING" id="298653.Franean1_6873"/>
<dbReference type="KEGG" id="fre:Franean1_6873"/>
<dbReference type="HOGENOM" id="CLU_145318_1_0_11"/>
<dbReference type="GO" id="GO:0009399">
    <property type="term" value="P:nitrogen fixation"/>
    <property type="evidence" value="ECO:0007669"/>
    <property type="project" value="UniProtKB-UniRule"/>
</dbReference>
<dbReference type="HAMAP" id="MF_00529">
    <property type="entry name" value="NifW"/>
    <property type="match status" value="1"/>
</dbReference>
<dbReference type="InterPro" id="IPR004893">
    <property type="entry name" value="NifW"/>
</dbReference>
<dbReference type="Pfam" id="PF03206">
    <property type="entry name" value="NifW"/>
    <property type="match status" value="1"/>
</dbReference>
<dbReference type="PIRSF" id="PIRSF005790">
    <property type="entry name" value="NifW"/>
    <property type="match status" value="1"/>
</dbReference>
<sequence>MSALTSQLEEFRRCSTAEQYFDLLDVDYDPRVVAVNRLHILRFFAEEIAGLHDGADAEVSPEVLLRDYRAALIRAYEAFTTATALDHRLFKVLKDRAPEPAGFVPMSEITVERPATTQTDEKGQQR</sequence>
<proteinExistence type="inferred from homology"/>
<evidence type="ECO:0000255" key="1">
    <source>
        <dbReference type="HAMAP-Rule" id="MF_00529"/>
    </source>
</evidence>
<evidence type="ECO:0000256" key="2">
    <source>
        <dbReference type="SAM" id="MobiDB-lite"/>
    </source>
</evidence>
<protein>
    <recommendedName>
        <fullName evidence="1">Nitrogenase-stabilizing/protective protein NifW</fullName>
    </recommendedName>
</protein>
<keyword id="KW-0535">Nitrogen fixation</keyword>
<gene>
    <name evidence="1" type="primary">nifW</name>
    <name type="ordered locus">Franean1_6873</name>
</gene>
<reference key="1">
    <citation type="journal article" date="2007" name="Genome Res.">
        <title>Genome characteristics of facultatively symbiotic Frankia sp. strains reflect host range and host plant biogeography.</title>
        <authorList>
            <person name="Normand P."/>
            <person name="Lapierre P."/>
            <person name="Tisa L.S."/>
            <person name="Gogarten J.P."/>
            <person name="Alloisio N."/>
            <person name="Bagnarol E."/>
            <person name="Bassi C.A."/>
            <person name="Berry A.M."/>
            <person name="Bickhart D.M."/>
            <person name="Choisne N."/>
            <person name="Couloux A."/>
            <person name="Cournoyer B."/>
            <person name="Cruveiller S."/>
            <person name="Daubin V."/>
            <person name="Demange N."/>
            <person name="Francino M.P."/>
            <person name="Goltsman E."/>
            <person name="Huang Y."/>
            <person name="Kopp O.R."/>
            <person name="Labarre L."/>
            <person name="Lapidus A."/>
            <person name="Lavire C."/>
            <person name="Marechal J."/>
            <person name="Martinez M."/>
            <person name="Mastronunzio J.E."/>
            <person name="Mullin B.C."/>
            <person name="Niemann J."/>
            <person name="Pujic P."/>
            <person name="Rawnsley T."/>
            <person name="Rouy Z."/>
            <person name="Schenowitz C."/>
            <person name="Sellstedt A."/>
            <person name="Tavares F."/>
            <person name="Tomkins J.P."/>
            <person name="Vallenet D."/>
            <person name="Valverde C."/>
            <person name="Wall L.G."/>
            <person name="Wang Y."/>
            <person name="Medigue C."/>
            <person name="Benson D.R."/>
        </authorList>
    </citation>
    <scope>NUCLEOTIDE SEQUENCE [LARGE SCALE GENOMIC DNA]</scope>
    <source>
        <strain>EAN1pec</strain>
    </source>
</reference>
<organism>
    <name type="scientific">Parafrankia sp. (strain EAN1pec)</name>
    <dbReference type="NCBI Taxonomy" id="298653"/>
    <lineage>
        <taxon>Bacteria</taxon>
        <taxon>Bacillati</taxon>
        <taxon>Actinomycetota</taxon>
        <taxon>Actinomycetes</taxon>
        <taxon>Frankiales</taxon>
        <taxon>Frankiaceae</taxon>
        <taxon>Parafrankia</taxon>
    </lineage>
</organism>
<accession>A8L2B6</accession>
<feature type="chain" id="PRO_1000127808" description="Nitrogenase-stabilizing/protective protein NifW">
    <location>
        <begin position="1"/>
        <end position="126"/>
    </location>
</feature>
<feature type="region of interest" description="Disordered" evidence="2">
    <location>
        <begin position="104"/>
        <end position="126"/>
    </location>
</feature>
<comment type="function">
    <text evidence="1">May protect the nitrogenase Fe-Mo protein from oxidative damage.</text>
</comment>
<comment type="subunit">
    <text evidence="1">Homotrimer; associates with NifD.</text>
</comment>
<comment type="similarity">
    <text evidence="1">Belongs to the NifW family.</text>
</comment>
<name>NIFW_PARS2</name>